<protein>
    <recommendedName>
        <fullName evidence="1">Protein Ycf2</fullName>
    </recommendedName>
</protein>
<sequence length="1988" mass="233962">MKGQQFKLWILEFREIKNSHYFLDSWTQFNSLGSFIHIFFHQERFIKLLDSRIWSILLSRNSQGSTSNRYFTIKGVVLFVVAVVLIYRINNRKMVERKNLYLTGFLPIPMNFIGPRNDTLEESFGSSNINRLIVLLLYLPTSFVQVTDSSQLKGSSDQSRDHFDSISNEDSEYHTLINQKEIQQPLPEEIEEFLGNPTRSIRSFFSDRWSELHMGSNPIERSTRDQKLLKKEQDVSFVPSRRSENKEIVNIFKIITYLQNTVSIHPISSDPGCDMVPKDELDMDSSNKISFLKKNPFIYLFHLFHDRNRRGYTLHHDFESEERFQEMADLFTLSITEPDLVYHKGFAFSIDSYGLDQKQFLNEVFNSRDESKKKYLLVLPPIFYEENDSFYRRIRKKWVRTSPGNDLEDPKQKIVVFASNNIMEAVNQYRLIRNLIQIQYYRYIRNVLNRFFLMNRSDRDLEYGIQRDQIGNDTLNHRTIMKYTINQHLSNFKKGQKKWFDPLILISRTERSMNRDPNAYRYKWSNGSKNFQEHFISEQKSHFHFQVVFDRLRINQYSIDWSEVIDKKDWSKSLRFFLSKLLVFLSKFLLFLSNSLPFFFVSFGNIPIHRSEIHIYELKGPNDRLCNQLLESIGLQIVHLKKLKPFLLDDHYTSQKSKFLINGGTISPFLFNKIPKWMIDSFDTRNNRRKSFDNTDSYFSMISHDQDNWLNPVKPFHRSSLISSFYKATRLRFLNNPHHFCFYCNKRFPFYVDYVEKARINNYDFTYGQFLNILFIRNKIFSLCGGKKKHAFLERDTISPIESQVSNIFIPNDFPQSGDERYNLYKSFHFPIRSNPFVRRAIYSIADISVTPLTEGQIVNFERTYCQPLSDMNLSDSEGKNLHQYLNFNSNMGLIHTPCSEKYLPSEKRKKQSLYRKKCLEKGQMYRTFQRDSAFSTLSKWNLFQTYMPWFFTSTGYKYLNLLFLDTFSDLLPILSSSPKFVSIFDDIMHRSDRSWRILRKKLCLPQWNLISEISIKCLPNLLLSEEMIHRNNESPSISTHLRSPNVREFLYSILFLLLIAVYLVRTHLLFVSRAYSELQTEFEKVKSLMIPSYMIELRKLLDRYPTYERNSFWLKNLFLVALEQLGDSLEEIWGSASGGGPAYGVKSIRSKKKDWNINLINLISIIPNPINRIAFSRNTRHLSHTSKEIYSLIRKNVNGDWIDDKIQSWVWNSDSIDDKEREFLVQFSTLTTEKRIDQILLSLTHSDHLSKNDSGYQMIEQPGVIYLRYLVDIQKKYLMNYKFNTSCLAERRTFLAHYQTITHSQTSCGANSFHFPSHGKLFSLRLALSPGILVIGSIGTGRSYLVKYLATNSYLPFITVFLNKFRDNKPKFIDDSDDDSDDIDDSGDIDDSDDIDRDLDIDTELELLTMMNALTMEMKLEIDQFYITLQFELIKAMSPCIIWIPNIHDLYVNKSSHLYFGLLVNYLYRDFERCSTTNILVIASTHIPQKVDPALIAPNKLNTCIKIRRLLIPQQRKHFFTLSYTRGFHLEKKMFHTNGFGSITMGSNVRDLVALTNEALSISITQRKSIIDTNIIRSALHRQTWDLRSQVRSVQDHGILFYQIGRALAQNVLLSNCSIDPISIYMKKKSCNEGGSYLYNWYFELETSMKKLTILLYLLNCSAGSVVQDLWSLSGPDEKNGITSYVLVENDSHLVHGLLEVEGALFGSSWTEKDCSRFDNDRVTLLLRPEPRNPLDMIQNGSSSIVDQIFLYQKYESKFEEGEGVLDPQQIEEDLFNHIVWAPRIWSPWGFLFDCIERPNELGVPYWARSFRGKRIIYDEEDELQENDSEFLQSGTVQYQTRDRSSKEQGFFLINQFIWDPADPLFFLFQDHPFVSVFSHREFFADEEMAKGLLTSQPAFPTSLEKRWFINIKNTQEKYVELLIHRQRWLRTRTNSSLSKSNGFFRSNTLSESYQYLSNLFLSNGTLLDQMTKTLLRKRWLFPDEMK</sequence>
<accession>Q2QD30</accession>
<accession>A5J1X8</accession>
<accession>Q4VZK7</accession>
<accession>Q4VZM5</accession>
<evidence type="ECO:0000255" key="1">
    <source>
        <dbReference type="HAMAP-Rule" id="MF_01330"/>
    </source>
</evidence>
<evidence type="ECO:0000256" key="2">
    <source>
        <dbReference type="SAM" id="MobiDB-lite"/>
    </source>
</evidence>
<evidence type="ECO:0000305" key="3"/>
<comment type="function">
    <text>Probable ATPase of unknown function. Its presence in a non-photosynthetic plant (Epifagus virginiana) and experiments in tobacco indicate that it has an essential function which is probably not related to photosynthesis.</text>
</comment>
<comment type="subcellular location">
    <subcellularLocation>
        <location evidence="1">Plastid</location>
        <location evidence="1">Chloroplast stroma</location>
    </subcellularLocation>
</comment>
<comment type="similarity">
    <text evidence="1">Belongs to the Ycf2 family.</text>
</comment>
<comment type="caution">
    <text evidence="3">There are two genes for this protein in the chloroplast inverted repeat; while are usually identical, in the sequence from PubMed:17607527 they are not.</text>
</comment>
<name>YCF2_CUCSA</name>
<gene>
    <name evidence="1" type="primary">ycf2-A</name>
    <name type="ordered locus">CsCp086</name>
</gene>
<gene>
    <name evidence="1" type="primary">ycf2-B</name>
    <name type="ordered locus">CsCp127</name>
</gene>
<organism>
    <name type="scientific">Cucumis sativus</name>
    <name type="common">Cucumber</name>
    <dbReference type="NCBI Taxonomy" id="3659"/>
    <lineage>
        <taxon>Eukaryota</taxon>
        <taxon>Viridiplantae</taxon>
        <taxon>Streptophyta</taxon>
        <taxon>Embryophyta</taxon>
        <taxon>Tracheophyta</taxon>
        <taxon>Spermatophyta</taxon>
        <taxon>Magnoliopsida</taxon>
        <taxon>eudicotyledons</taxon>
        <taxon>Gunneridae</taxon>
        <taxon>Pentapetalae</taxon>
        <taxon>rosids</taxon>
        <taxon>fabids</taxon>
        <taxon>Cucurbitales</taxon>
        <taxon>Cucurbitaceae</taxon>
        <taxon>Benincaseae</taxon>
        <taxon>Cucumis</taxon>
    </lineage>
</organism>
<feature type="chain" id="PRO_0000242529" description="Protein Ycf2">
    <location>
        <begin position="1"/>
        <end position="1988"/>
    </location>
</feature>
<feature type="region of interest" description="Disordered" evidence="2">
    <location>
        <begin position="1377"/>
        <end position="1396"/>
    </location>
</feature>
<feature type="binding site" evidence="1">
    <location>
        <begin position="1337"/>
        <end position="1344"/>
    </location>
    <ligand>
        <name>ATP</name>
        <dbReference type="ChEBI" id="CHEBI:30616"/>
    </ligand>
</feature>
<feature type="sequence conflict" description="In Ref. 2; CAJ00802." evidence="3" ref="2">
    <original>R</original>
    <variation>S</variation>
    <location>
        <position position="1845"/>
    </location>
</feature>
<feature type="sequence conflict" description="In Ref. 2; CAJ00802." evidence="3" ref="2">
    <original>L</original>
    <variation>RS</variation>
    <location>
        <position position="1866"/>
    </location>
</feature>
<feature type="sequence conflict" description="In Ref. 2; CAJ00802." evidence="3" ref="2">
    <original>DHPFVSVFSH</original>
    <variation>GSSFCLWCFHI</variation>
    <location>
        <begin position="1872"/>
        <end position="1881"/>
    </location>
</feature>
<feature type="sequence conflict" description="In Ref. 2; CAJ00802." evidence="3" ref="2">
    <original>R</original>
    <variation>P</variation>
    <location>
        <position position="1908"/>
    </location>
</feature>
<feature type="sequence conflict" description="In Ref. 2; CAJ00802." evidence="3" ref="2">
    <original>R</original>
    <variation>H</variation>
    <location>
        <position position="1927"/>
    </location>
</feature>
<feature type="sequence conflict" description="In Ref. 2; CAJ00802." evidence="3" ref="2">
    <original>R</original>
    <variation>K</variation>
    <location>
        <position position="1932"/>
    </location>
</feature>
<feature type="sequence conflict" description="In Ref. 2; CAJ00802." evidence="3" ref="2">
    <original>N</original>
    <variation>K</variation>
    <location>
        <position position="1943"/>
    </location>
</feature>
<feature type="sequence conflict" description="In Ref. 2; CAJ00802." evidence="3" ref="2">
    <original>E</original>
    <variation>Q</variation>
    <location>
        <position position="1953"/>
    </location>
</feature>
<dbReference type="EMBL" id="DQ119058">
    <property type="protein sequence ID" value="AAZ94693.1"/>
    <property type="molecule type" value="Genomic_DNA"/>
</dbReference>
<dbReference type="EMBL" id="DQ119058">
    <property type="protein sequence ID" value="AAZ94710.1"/>
    <property type="molecule type" value="Genomic_DNA"/>
</dbReference>
<dbReference type="EMBL" id="AJ970307">
    <property type="protein sequence ID" value="CAJ00802.1"/>
    <property type="molecule type" value="Genomic_DNA"/>
</dbReference>
<dbReference type="EMBL" id="AJ970307">
    <property type="protein sequence ID" value="CAJ00820.1"/>
    <property type="molecule type" value="Genomic_DNA"/>
</dbReference>
<dbReference type="EMBL" id="DQ865975">
    <property type="protein sequence ID" value="ABI97475.1"/>
    <property type="molecule type" value="Genomic_DNA"/>
</dbReference>
<dbReference type="EMBL" id="DQ865975">
    <property type="protein sequence ID" value="ABI97478.1"/>
    <property type="molecule type" value="Genomic_DNA"/>
</dbReference>
<dbReference type="EMBL" id="DQ865976">
    <property type="protein sequence ID" value="ABI98789.1"/>
    <property type="molecule type" value="Genomic_DNA"/>
</dbReference>
<dbReference type="EMBL" id="DQ865976">
    <property type="protein sequence ID" value="ABI98807.1"/>
    <property type="molecule type" value="Genomic_DNA"/>
</dbReference>
<dbReference type="KEGG" id="csv:3429358"/>
<dbReference type="KEGG" id="csv:3429359"/>
<dbReference type="eggNOG" id="ENOG502QRDV">
    <property type="taxonomic scope" value="Eukaryota"/>
</dbReference>
<dbReference type="OrthoDB" id="1852053at2759"/>
<dbReference type="GO" id="GO:0009570">
    <property type="term" value="C:chloroplast stroma"/>
    <property type="evidence" value="ECO:0007669"/>
    <property type="project" value="UniProtKB-SubCell"/>
</dbReference>
<dbReference type="GO" id="GO:0005524">
    <property type="term" value="F:ATP binding"/>
    <property type="evidence" value="ECO:0007669"/>
    <property type="project" value="UniProtKB-KW"/>
</dbReference>
<dbReference type="GO" id="GO:0016887">
    <property type="term" value="F:ATP hydrolysis activity"/>
    <property type="evidence" value="ECO:0007669"/>
    <property type="project" value="InterPro"/>
</dbReference>
<dbReference type="CDD" id="cd19505">
    <property type="entry name" value="RecA-like_Ycf2"/>
    <property type="match status" value="1"/>
</dbReference>
<dbReference type="Gene3D" id="3.40.50.300">
    <property type="entry name" value="P-loop containing nucleotide triphosphate hydrolases"/>
    <property type="match status" value="1"/>
</dbReference>
<dbReference type="HAMAP" id="MF_01330">
    <property type="entry name" value="Ycf2"/>
    <property type="match status" value="1"/>
</dbReference>
<dbReference type="InterPro" id="IPR003959">
    <property type="entry name" value="ATPase_AAA_core"/>
</dbReference>
<dbReference type="InterPro" id="IPR027417">
    <property type="entry name" value="P-loop_NTPase"/>
</dbReference>
<dbReference type="InterPro" id="IPR008543">
    <property type="entry name" value="Uncharacterised_Ycf2"/>
</dbReference>
<dbReference type="InterPro" id="IPR056777">
    <property type="entry name" value="Ycf2_N"/>
</dbReference>
<dbReference type="PANTHER" id="PTHR33078:SF51">
    <property type="entry name" value="PROTEIN TIC 214"/>
    <property type="match status" value="1"/>
</dbReference>
<dbReference type="PANTHER" id="PTHR33078">
    <property type="entry name" value="PROTEIN YCF2-RELATED"/>
    <property type="match status" value="1"/>
</dbReference>
<dbReference type="Pfam" id="PF00004">
    <property type="entry name" value="AAA"/>
    <property type="match status" value="1"/>
</dbReference>
<dbReference type="Pfam" id="PF05695">
    <property type="entry name" value="Ycf2"/>
    <property type="match status" value="3"/>
</dbReference>
<dbReference type="SUPFAM" id="SSF52540">
    <property type="entry name" value="P-loop containing nucleoside triphosphate hydrolases"/>
    <property type="match status" value="1"/>
</dbReference>
<keyword id="KW-0067">ATP-binding</keyword>
<keyword id="KW-0150">Chloroplast</keyword>
<keyword id="KW-0547">Nucleotide-binding</keyword>
<keyword id="KW-0934">Plastid</keyword>
<reference key="1">
    <citation type="journal article" date="2006" name="Plant Cell Rep.">
        <title>Complete sequence and organization of the cucumber (Cucumis sativus L. cv. Baekmibaekdadagi) chloroplast genome.</title>
        <authorList>
            <person name="Kim J.-S."/>
            <person name="Jung J.D."/>
            <person name="Lee J.-A."/>
            <person name="Park H.-W."/>
            <person name="Oh K.-H."/>
            <person name="Jeong W.J."/>
            <person name="Choi D.-W."/>
            <person name="Liu J.R."/>
            <person name="Cho K.Y."/>
        </authorList>
    </citation>
    <scope>NUCLEOTIDE SEQUENCE [LARGE SCALE GENOMIC DNA]</scope>
    <source>
        <strain>cv. Baekmibaekdadagi</strain>
    </source>
</reference>
<reference key="2">
    <citation type="journal article" date="2007" name="Cell. Mol. Biol. Lett.">
        <title>The complete structure of the cucumber (Cucumis sativus L.) chloroplast genome: its composition and comparative analysis.</title>
        <authorList>
            <person name="Plader W.W."/>
            <person name="Yukawa Y."/>
            <person name="Sugiura M."/>
            <person name="Malepszy S."/>
        </authorList>
    </citation>
    <scope>NUCLEOTIDE SEQUENCE [LARGE SCALE GENOMIC DNA]</scope>
    <source>
        <strain>cv. Borszczagowski</strain>
    </source>
</reference>
<reference key="3">
    <citation type="journal article" date="2007" name="Genome">
        <title>Sequencing cucumber (Cucumis sativus L.) chloroplast genomes identifies differences between chilling-tolerant and -susceptible cucumber lines.</title>
        <authorList>
            <person name="Chung S.-M."/>
            <person name="Gordon V.S."/>
            <person name="Staub J.E."/>
        </authorList>
    </citation>
    <scope>NUCLEOTIDE SEQUENCE [LARGE SCALE GENOMIC DNA]</scope>
    <source>
        <strain>cv. Chipper</strain>
        <strain>cv. Gy14</strain>
    </source>
</reference>
<geneLocation type="chloroplast"/>
<proteinExistence type="inferred from homology"/>